<dbReference type="EC" id="2.1.1.189" evidence="1"/>
<dbReference type="EMBL" id="CP000720">
    <property type="protein sequence ID" value="ABS48705.1"/>
    <property type="molecule type" value="Genomic_DNA"/>
</dbReference>
<dbReference type="RefSeq" id="WP_012105400.1">
    <property type="nucleotide sequence ID" value="NC_009708.1"/>
</dbReference>
<dbReference type="SMR" id="A7FK27"/>
<dbReference type="GeneID" id="49786552"/>
<dbReference type="KEGG" id="ypi:YpsIP31758_2640"/>
<dbReference type="HOGENOM" id="CLU_014689_0_0_6"/>
<dbReference type="Proteomes" id="UP000002412">
    <property type="component" value="Chromosome"/>
</dbReference>
<dbReference type="GO" id="GO:0051539">
    <property type="term" value="F:4 iron, 4 sulfur cluster binding"/>
    <property type="evidence" value="ECO:0007669"/>
    <property type="project" value="UniProtKB-KW"/>
</dbReference>
<dbReference type="GO" id="GO:0005506">
    <property type="term" value="F:iron ion binding"/>
    <property type="evidence" value="ECO:0007669"/>
    <property type="project" value="UniProtKB-UniRule"/>
</dbReference>
<dbReference type="GO" id="GO:0070041">
    <property type="term" value="F:rRNA (uridine-C5-)-methyltransferase activity"/>
    <property type="evidence" value="ECO:0007669"/>
    <property type="project" value="UniProtKB-UniRule"/>
</dbReference>
<dbReference type="GO" id="GO:0070475">
    <property type="term" value="P:rRNA base methylation"/>
    <property type="evidence" value="ECO:0007669"/>
    <property type="project" value="TreeGrafter"/>
</dbReference>
<dbReference type="CDD" id="cd02440">
    <property type="entry name" value="AdoMet_MTases"/>
    <property type="match status" value="1"/>
</dbReference>
<dbReference type="FunFam" id="2.40.50.1070:FF:000002">
    <property type="entry name" value="23S rRNA (uracil(747)-C(5))-methyltransferase RlmC"/>
    <property type="match status" value="1"/>
</dbReference>
<dbReference type="Gene3D" id="2.40.50.1070">
    <property type="match status" value="1"/>
</dbReference>
<dbReference type="Gene3D" id="3.40.50.150">
    <property type="entry name" value="Vaccinia Virus protein VP39"/>
    <property type="match status" value="1"/>
</dbReference>
<dbReference type="HAMAP" id="MF_01012">
    <property type="entry name" value="23SrRNA_methyltr_RlmC"/>
    <property type="match status" value="1"/>
</dbReference>
<dbReference type="InterPro" id="IPR011825">
    <property type="entry name" value="23SrRNA_MeTrfase_RlmC"/>
</dbReference>
<dbReference type="InterPro" id="IPR030390">
    <property type="entry name" value="MeTrfase_TrmA_AS"/>
</dbReference>
<dbReference type="InterPro" id="IPR030391">
    <property type="entry name" value="MeTrfase_TrmA_CS"/>
</dbReference>
<dbReference type="InterPro" id="IPR029063">
    <property type="entry name" value="SAM-dependent_MTases_sf"/>
</dbReference>
<dbReference type="InterPro" id="IPR010280">
    <property type="entry name" value="U5_MeTrfase_fam"/>
</dbReference>
<dbReference type="NCBIfam" id="TIGR02085">
    <property type="entry name" value="meth_trns_rumB"/>
    <property type="match status" value="1"/>
</dbReference>
<dbReference type="NCBIfam" id="TIGR00479">
    <property type="entry name" value="rumA"/>
    <property type="match status" value="1"/>
</dbReference>
<dbReference type="PANTHER" id="PTHR11061">
    <property type="entry name" value="RNA M5U METHYLTRANSFERASE"/>
    <property type="match status" value="1"/>
</dbReference>
<dbReference type="PANTHER" id="PTHR11061:SF30">
    <property type="entry name" value="TRNA (URACIL(54)-C(5))-METHYLTRANSFERASE"/>
    <property type="match status" value="1"/>
</dbReference>
<dbReference type="Pfam" id="PF05958">
    <property type="entry name" value="tRNA_U5-meth_tr"/>
    <property type="match status" value="1"/>
</dbReference>
<dbReference type="SUPFAM" id="SSF53335">
    <property type="entry name" value="S-adenosyl-L-methionine-dependent methyltransferases"/>
    <property type="match status" value="1"/>
</dbReference>
<dbReference type="PROSITE" id="PS51687">
    <property type="entry name" value="SAM_MT_RNA_M5U"/>
    <property type="match status" value="1"/>
</dbReference>
<dbReference type="PROSITE" id="PS01230">
    <property type="entry name" value="TRMA_1"/>
    <property type="match status" value="1"/>
</dbReference>
<dbReference type="PROSITE" id="PS01231">
    <property type="entry name" value="TRMA_2"/>
    <property type="match status" value="1"/>
</dbReference>
<proteinExistence type="inferred from homology"/>
<name>RLMC_YERP3</name>
<sequence>MHCAQYAAGRCRSCQWLDKPYPQQLADKQHHLESLLAGHAVTQWLALVFGRESAFRNKAKMVVSGSVERPLLGMLHRDGTPVDLCACPLYPPSFEPVFTVLKTFIARAGLTPYNVARKRGELKFLLLTESTYNGELMLRFVLRSETKLAQLTAALPWLQQQLPQLAVISANIQPVHMAILEGEREIPLTEQQALPERFNQVPLYIRPQSFFQTNPPVAASLYATARQWVQEHEVHSMWDLFCGVGGFGLHCAGPETQLTGIEISAEAIACARQSAEQLGLKNVSFAALDSTRFATAEAQIPELVLVNPPRRGIGRELCDYLSQMAPKFILYSSCNAETMAKDISLLAGYHIERVQLFDMFPHTSHYEVLTLLALRR</sequence>
<organism>
    <name type="scientific">Yersinia pseudotuberculosis serotype O:1b (strain IP 31758)</name>
    <dbReference type="NCBI Taxonomy" id="349747"/>
    <lineage>
        <taxon>Bacteria</taxon>
        <taxon>Pseudomonadati</taxon>
        <taxon>Pseudomonadota</taxon>
        <taxon>Gammaproteobacteria</taxon>
        <taxon>Enterobacterales</taxon>
        <taxon>Yersiniaceae</taxon>
        <taxon>Yersinia</taxon>
    </lineage>
</organism>
<reference key="1">
    <citation type="journal article" date="2007" name="PLoS Genet.">
        <title>The complete genome sequence of Yersinia pseudotuberculosis IP31758, the causative agent of Far East scarlet-like fever.</title>
        <authorList>
            <person name="Eppinger M."/>
            <person name="Rosovitz M.J."/>
            <person name="Fricke W.F."/>
            <person name="Rasko D.A."/>
            <person name="Kokorina G."/>
            <person name="Fayolle C."/>
            <person name="Lindler L.E."/>
            <person name="Carniel E."/>
            <person name="Ravel J."/>
        </authorList>
    </citation>
    <scope>NUCLEOTIDE SEQUENCE [LARGE SCALE GENOMIC DNA]</scope>
    <source>
        <strain>IP 31758</strain>
    </source>
</reference>
<feature type="chain" id="PRO_1000063010" description="23S rRNA (uracil(747)-C(5))-methyltransferase RlmC">
    <location>
        <begin position="1"/>
        <end position="376"/>
    </location>
</feature>
<feature type="active site" description="Nucleophile" evidence="1">
    <location>
        <position position="334"/>
    </location>
</feature>
<feature type="binding site" evidence="1">
    <location>
        <position position="3"/>
    </location>
    <ligand>
        <name>[4Fe-4S] cluster</name>
        <dbReference type="ChEBI" id="CHEBI:49883"/>
    </ligand>
</feature>
<feature type="binding site" evidence="1">
    <location>
        <position position="11"/>
    </location>
    <ligand>
        <name>[4Fe-4S] cluster</name>
        <dbReference type="ChEBI" id="CHEBI:49883"/>
    </ligand>
</feature>
<feature type="binding site" evidence="1">
    <location>
        <position position="14"/>
    </location>
    <ligand>
        <name>[4Fe-4S] cluster</name>
        <dbReference type="ChEBI" id="CHEBI:49883"/>
    </ligand>
</feature>
<feature type="binding site" evidence="1">
    <location>
        <position position="87"/>
    </location>
    <ligand>
        <name>[4Fe-4S] cluster</name>
        <dbReference type="ChEBI" id="CHEBI:49883"/>
    </ligand>
</feature>
<feature type="binding site" evidence="1">
    <location>
        <position position="212"/>
    </location>
    <ligand>
        <name>S-adenosyl-L-methionine</name>
        <dbReference type="ChEBI" id="CHEBI:59789"/>
    </ligand>
</feature>
<feature type="binding site" evidence="1">
    <location>
        <position position="241"/>
    </location>
    <ligand>
        <name>S-adenosyl-L-methionine</name>
        <dbReference type="ChEBI" id="CHEBI:59789"/>
    </ligand>
</feature>
<feature type="binding site" evidence="1">
    <location>
        <position position="262"/>
    </location>
    <ligand>
        <name>S-adenosyl-L-methionine</name>
        <dbReference type="ChEBI" id="CHEBI:59789"/>
    </ligand>
</feature>
<feature type="binding site" evidence="1">
    <location>
        <position position="307"/>
    </location>
    <ligand>
        <name>S-adenosyl-L-methionine</name>
        <dbReference type="ChEBI" id="CHEBI:59789"/>
    </ligand>
</feature>
<evidence type="ECO:0000255" key="1">
    <source>
        <dbReference type="HAMAP-Rule" id="MF_01012"/>
    </source>
</evidence>
<accession>A7FK27</accession>
<comment type="function">
    <text evidence="1">Catalyzes the formation of 5-methyl-uridine at position 747 (m5U747) in 23S rRNA.</text>
</comment>
<comment type="catalytic activity">
    <reaction evidence="1">
        <text>uridine(747) in 23S rRNA + S-adenosyl-L-methionine = 5-methyluridine(747) in 23S rRNA + S-adenosyl-L-homocysteine + H(+)</text>
        <dbReference type="Rhea" id="RHEA:42628"/>
        <dbReference type="Rhea" id="RHEA-COMP:10154"/>
        <dbReference type="Rhea" id="RHEA-COMP:10155"/>
        <dbReference type="ChEBI" id="CHEBI:15378"/>
        <dbReference type="ChEBI" id="CHEBI:57856"/>
        <dbReference type="ChEBI" id="CHEBI:59789"/>
        <dbReference type="ChEBI" id="CHEBI:65315"/>
        <dbReference type="ChEBI" id="CHEBI:74447"/>
        <dbReference type="EC" id="2.1.1.189"/>
    </reaction>
</comment>
<comment type="similarity">
    <text evidence="1">Belongs to the class I-like SAM-binding methyltransferase superfamily. RNA M5U methyltransferase family. RlmC subfamily.</text>
</comment>
<gene>
    <name evidence="1" type="primary">rlmC</name>
    <name type="synonym">rumB</name>
    <name type="ordered locus">YpsIP31758_2640</name>
</gene>
<protein>
    <recommendedName>
        <fullName evidence="1">23S rRNA (uracil(747)-C(5))-methyltransferase RlmC</fullName>
        <ecNumber evidence="1">2.1.1.189</ecNumber>
    </recommendedName>
    <alternativeName>
        <fullName evidence="1">23S rRNA(m5U747)-methyltransferase</fullName>
    </alternativeName>
</protein>
<keyword id="KW-0004">4Fe-4S</keyword>
<keyword id="KW-0408">Iron</keyword>
<keyword id="KW-0411">Iron-sulfur</keyword>
<keyword id="KW-0479">Metal-binding</keyword>
<keyword id="KW-0489">Methyltransferase</keyword>
<keyword id="KW-0698">rRNA processing</keyword>
<keyword id="KW-0949">S-adenosyl-L-methionine</keyword>
<keyword id="KW-0808">Transferase</keyword>